<gene>
    <name evidence="1" type="primary">def</name>
    <name type="ordered locus">BRADO0770</name>
</gene>
<sequence length="175" mass="19976">MSLREIIILPDRQLRLVSKPVEKVTPEIRQLVDDMFQTMYDAPGIGLAAIQVAQPLRVITMDLAKPDSGGETKREPRVFINPEIIAKSDELSVYEEGCLSIPEYYEEVERPARVRVRFTDLDGVVREEDAEGLYATCIQHEIDHLNGVLFIDYLSKLKRDRVMKKFTKAAKRAGE</sequence>
<protein>
    <recommendedName>
        <fullName evidence="1">Peptide deformylase</fullName>
        <shortName evidence="1">PDF</shortName>
        <ecNumber evidence="1">3.5.1.88</ecNumber>
    </recommendedName>
    <alternativeName>
        <fullName evidence="1">Polypeptide deformylase</fullName>
    </alternativeName>
</protein>
<dbReference type="EC" id="3.5.1.88" evidence="1"/>
<dbReference type="EMBL" id="CU234118">
    <property type="protein sequence ID" value="CAL74695.1"/>
    <property type="molecule type" value="Genomic_DNA"/>
</dbReference>
<dbReference type="RefSeq" id="WP_011923950.1">
    <property type="nucleotide sequence ID" value="NC_009445.1"/>
</dbReference>
<dbReference type="SMR" id="A4YLB9"/>
<dbReference type="STRING" id="114615.BRADO0770"/>
<dbReference type="KEGG" id="bra:BRADO0770"/>
<dbReference type="eggNOG" id="COG0242">
    <property type="taxonomic scope" value="Bacteria"/>
</dbReference>
<dbReference type="HOGENOM" id="CLU_061901_2_0_5"/>
<dbReference type="OrthoDB" id="9804313at2"/>
<dbReference type="Proteomes" id="UP000001994">
    <property type="component" value="Chromosome"/>
</dbReference>
<dbReference type="GO" id="GO:0046872">
    <property type="term" value="F:metal ion binding"/>
    <property type="evidence" value="ECO:0007669"/>
    <property type="project" value="UniProtKB-KW"/>
</dbReference>
<dbReference type="GO" id="GO:0042586">
    <property type="term" value="F:peptide deformylase activity"/>
    <property type="evidence" value="ECO:0007669"/>
    <property type="project" value="UniProtKB-UniRule"/>
</dbReference>
<dbReference type="GO" id="GO:0043686">
    <property type="term" value="P:co-translational protein modification"/>
    <property type="evidence" value="ECO:0007669"/>
    <property type="project" value="TreeGrafter"/>
</dbReference>
<dbReference type="GO" id="GO:0006412">
    <property type="term" value="P:translation"/>
    <property type="evidence" value="ECO:0007669"/>
    <property type="project" value="UniProtKB-UniRule"/>
</dbReference>
<dbReference type="CDD" id="cd00487">
    <property type="entry name" value="Pep_deformylase"/>
    <property type="match status" value="1"/>
</dbReference>
<dbReference type="FunFam" id="3.90.45.10:FF:000001">
    <property type="entry name" value="Peptide deformylase"/>
    <property type="match status" value="1"/>
</dbReference>
<dbReference type="Gene3D" id="3.90.45.10">
    <property type="entry name" value="Peptide deformylase"/>
    <property type="match status" value="1"/>
</dbReference>
<dbReference type="HAMAP" id="MF_00163">
    <property type="entry name" value="Pep_deformylase"/>
    <property type="match status" value="1"/>
</dbReference>
<dbReference type="InterPro" id="IPR023635">
    <property type="entry name" value="Peptide_deformylase"/>
</dbReference>
<dbReference type="InterPro" id="IPR036821">
    <property type="entry name" value="Peptide_deformylase_sf"/>
</dbReference>
<dbReference type="NCBIfam" id="TIGR00079">
    <property type="entry name" value="pept_deformyl"/>
    <property type="match status" value="1"/>
</dbReference>
<dbReference type="NCBIfam" id="NF001159">
    <property type="entry name" value="PRK00150.1-3"/>
    <property type="match status" value="1"/>
</dbReference>
<dbReference type="PANTHER" id="PTHR10458">
    <property type="entry name" value="PEPTIDE DEFORMYLASE"/>
    <property type="match status" value="1"/>
</dbReference>
<dbReference type="PANTHER" id="PTHR10458:SF22">
    <property type="entry name" value="PEPTIDE DEFORMYLASE"/>
    <property type="match status" value="1"/>
</dbReference>
<dbReference type="Pfam" id="PF01327">
    <property type="entry name" value="Pep_deformylase"/>
    <property type="match status" value="1"/>
</dbReference>
<dbReference type="PIRSF" id="PIRSF004749">
    <property type="entry name" value="Pep_def"/>
    <property type="match status" value="1"/>
</dbReference>
<dbReference type="PRINTS" id="PR01576">
    <property type="entry name" value="PDEFORMYLASE"/>
</dbReference>
<dbReference type="SUPFAM" id="SSF56420">
    <property type="entry name" value="Peptide deformylase"/>
    <property type="match status" value="1"/>
</dbReference>
<proteinExistence type="inferred from homology"/>
<feature type="chain" id="PRO_0000301013" description="Peptide deformylase">
    <location>
        <begin position="1"/>
        <end position="175"/>
    </location>
</feature>
<feature type="active site" evidence="1">
    <location>
        <position position="141"/>
    </location>
</feature>
<feature type="binding site" evidence="1">
    <location>
        <position position="98"/>
    </location>
    <ligand>
        <name>Fe cation</name>
        <dbReference type="ChEBI" id="CHEBI:24875"/>
    </ligand>
</feature>
<feature type="binding site" evidence="1">
    <location>
        <position position="140"/>
    </location>
    <ligand>
        <name>Fe cation</name>
        <dbReference type="ChEBI" id="CHEBI:24875"/>
    </ligand>
</feature>
<feature type="binding site" evidence="1">
    <location>
        <position position="144"/>
    </location>
    <ligand>
        <name>Fe cation</name>
        <dbReference type="ChEBI" id="CHEBI:24875"/>
    </ligand>
</feature>
<comment type="function">
    <text evidence="1">Removes the formyl group from the N-terminal Met of newly synthesized proteins. Requires at least a dipeptide for an efficient rate of reaction. N-terminal L-methionine is a prerequisite for activity but the enzyme has broad specificity at other positions.</text>
</comment>
<comment type="catalytic activity">
    <reaction evidence="1">
        <text>N-terminal N-formyl-L-methionyl-[peptide] + H2O = N-terminal L-methionyl-[peptide] + formate</text>
        <dbReference type="Rhea" id="RHEA:24420"/>
        <dbReference type="Rhea" id="RHEA-COMP:10639"/>
        <dbReference type="Rhea" id="RHEA-COMP:10640"/>
        <dbReference type="ChEBI" id="CHEBI:15377"/>
        <dbReference type="ChEBI" id="CHEBI:15740"/>
        <dbReference type="ChEBI" id="CHEBI:49298"/>
        <dbReference type="ChEBI" id="CHEBI:64731"/>
        <dbReference type="EC" id="3.5.1.88"/>
    </reaction>
</comment>
<comment type="cofactor">
    <cofactor evidence="1">
        <name>Fe(2+)</name>
        <dbReference type="ChEBI" id="CHEBI:29033"/>
    </cofactor>
    <text evidence="1">Binds 1 Fe(2+) ion.</text>
</comment>
<comment type="similarity">
    <text evidence="1">Belongs to the polypeptide deformylase family.</text>
</comment>
<reference key="1">
    <citation type="journal article" date="2007" name="Science">
        <title>Legumes symbioses: absence of nod genes in photosynthetic bradyrhizobia.</title>
        <authorList>
            <person name="Giraud E."/>
            <person name="Moulin L."/>
            <person name="Vallenet D."/>
            <person name="Barbe V."/>
            <person name="Cytryn E."/>
            <person name="Avarre J.-C."/>
            <person name="Jaubert M."/>
            <person name="Simon D."/>
            <person name="Cartieaux F."/>
            <person name="Prin Y."/>
            <person name="Bena G."/>
            <person name="Hannibal L."/>
            <person name="Fardoux J."/>
            <person name="Kojadinovic M."/>
            <person name="Vuillet L."/>
            <person name="Lajus A."/>
            <person name="Cruveiller S."/>
            <person name="Rouy Z."/>
            <person name="Mangenot S."/>
            <person name="Segurens B."/>
            <person name="Dossat C."/>
            <person name="Franck W.L."/>
            <person name="Chang W.-S."/>
            <person name="Saunders E."/>
            <person name="Bruce D."/>
            <person name="Richardson P."/>
            <person name="Normand P."/>
            <person name="Dreyfus B."/>
            <person name="Pignol D."/>
            <person name="Stacey G."/>
            <person name="Emerich D."/>
            <person name="Vermeglio A."/>
            <person name="Medigue C."/>
            <person name="Sadowsky M."/>
        </authorList>
    </citation>
    <scope>NUCLEOTIDE SEQUENCE [LARGE SCALE GENOMIC DNA]</scope>
    <source>
        <strain>ORS 278</strain>
    </source>
</reference>
<accession>A4YLB9</accession>
<name>DEF_BRASO</name>
<evidence type="ECO:0000255" key="1">
    <source>
        <dbReference type="HAMAP-Rule" id="MF_00163"/>
    </source>
</evidence>
<keyword id="KW-0378">Hydrolase</keyword>
<keyword id="KW-0408">Iron</keyword>
<keyword id="KW-0479">Metal-binding</keyword>
<keyword id="KW-0648">Protein biosynthesis</keyword>
<keyword id="KW-1185">Reference proteome</keyword>
<organism>
    <name type="scientific">Bradyrhizobium sp. (strain ORS 278)</name>
    <dbReference type="NCBI Taxonomy" id="114615"/>
    <lineage>
        <taxon>Bacteria</taxon>
        <taxon>Pseudomonadati</taxon>
        <taxon>Pseudomonadota</taxon>
        <taxon>Alphaproteobacteria</taxon>
        <taxon>Hyphomicrobiales</taxon>
        <taxon>Nitrobacteraceae</taxon>
        <taxon>Bradyrhizobium</taxon>
    </lineage>
</organism>